<comment type="similarity">
    <text evidence="2">Belongs to the CdaR family.</text>
</comment>
<sequence length="414" mass="44638">MNDNQLAPVARPRSPLELLDTVPDSLLRRLKQYSGRLATEAVSAMQERLPFFADLEASQRASVALVVQTAVVNFVEWMHDPHSDVGYTAQAFELVPQDLTRRIALRQTVDMVRVTMEFFEEVVPLLARSEEQLTALTVGILKYSRDLAFTAATAYADAAEARGTWDSRMEASVVDAVVRGDTGPELLSRAAALNWDTTAPATVLVGTPAPGPNGSNSDGDSERASQDVRDTAARHGRAALTDVHGTWLVAIVSGQLSPTEKFLKDLLAAFADAPVVIGPTAPMLTAAHRSASEAISGMNAVAGWRGAPRPVLARELLPERALMGDASAIVALHTDVMRPLADAGPTLIETLDAYLDCGGAIEACARKLFVHPNTVRYRLKRITDFTGRDPTQPRDAYVLRVAATVGQLNYPTPH</sequence>
<organism>
    <name type="scientific">Mycobacterium tuberculosis (strain ATCC 25618 / H37Rv)</name>
    <dbReference type="NCBI Taxonomy" id="83332"/>
    <lineage>
        <taxon>Bacteria</taxon>
        <taxon>Bacillati</taxon>
        <taxon>Actinomycetota</taxon>
        <taxon>Actinomycetes</taxon>
        <taxon>Mycobacteriales</taxon>
        <taxon>Mycobacteriaceae</taxon>
        <taxon>Mycobacterium</taxon>
        <taxon>Mycobacterium tuberculosis complex</taxon>
    </lineage>
</organism>
<reference key="1">
    <citation type="journal article" date="1998" name="Nature">
        <title>Deciphering the biology of Mycobacterium tuberculosis from the complete genome sequence.</title>
        <authorList>
            <person name="Cole S.T."/>
            <person name="Brosch R."/>
            <person name="Parkhill J."/>
            <person name="Garnier T."/>
            <person name="Churcher C.M."/>
            <person name="Harris D.E."/>
            <person name="Gordon S.V."/>
            <person name="Eiglmeier K."/>
            <person name="Gas S."/>
            <person name="Barry C.E. III"/>
            <person name="Tekaia F."/>
            <person name="Badcock K."/>
            <person name="Basham D."/>
            <person name="Brown D."/>
            <person name="Chillingworth T."/>
            <person name="Connor R."/>
            <person name="Davies R.M."/>
            <person name="Devlin K."/>
            <person name="Feltwell T."/>
            <person name="Gentles S."/>
            <person name="Hamlin N."/>
            <person name="Holroyd S."/>
            <person name="Hornsby T."/>
            <person name="Jagels K."/>
            <person name="Krogh A."/>
            <person name="McLean J."/>
            <person name="Moule S."/>
            <person name="Murphy L.D."/>
            <person name="Oliver S."/>
            <person name="Osborne J."/>
            <person name="Quail M.A."/>
            <person name="Rajandream M.A."/>
            <person name="Rogers J."/>
            <person name="Rutter S."/>
            <person name="Seeger K."/>
            <person name="Skelton S."/>
            <person name="Squares S."/>
            <person name="Squares R."/>
            <person name="Sulston J.E."/>
            <person name="Taylor K."/>
            <person name="Whitehead S."/>
            <person name="Barrell B.G."/>
        </authorList>
    </citation>
    <scope>NUCLEOTIDE SEQUENCE [LARGE SCALE GENOMIC DNA]</scope>
    <source>
        <strain>ATCC 25618 / H37Rv</strain>
    </source>
</reference>
<reference key="2">
    <citation type="journal article" date="2011" name="Mol. Cell. Proteomics">
        <title>Proteogenomic analysis of Mycobacterium tuberculosis by high resolution mass spectrometry.</title>
        <authorList>
            <person name="Kelkar D.S."/>
            <person name="Kumar D."/>
            <person name="Kumar P."/>
            <person name="Balakrishnan L."/>
            <person name="Muthusamy B."/>
            <person name="Yadav A.K."/>
            <person name="Shrivastava P."/>
            <person name="Marimuthu A."/>
            <person name="Anand S."/>
            <person name="Sundaram H."/>
            <person name="Kingsbury R."/>
            <person name="Harsha H.C."/>
            <person name="Nair B."/>
            <person name="Prasad T.S."/>
            <person name="Chauhan D.S."/>
            <person name="Katoch K."/>
            <person name="Katoch V.M."/>
            <person name="Kumar P."/>
            <person name="Chaerkady R."/>
            <person name="Ramachandran S."/>
            <person name="Dash D."/>
            <person name="Pandey A."/>
        </authorList>
    </citation>
    <scope>IDENTIFICATION BY MASS SPECTROMETRY [LARGE SCALE ANALYSIS]</scope>
    <source>
        <strain>ATCC 25618 / H37Rv</strain>
    </source>
</reference>
<keyword id="KW-0002">3D-structure</keyword>
<keyword id="KW-1185">Reference proteome</keyword>
<evidence type="ECO:0000256" key="1">
    <source>
        <dbReference type="SAM" id="MobiDB-lite"/>
    </source>
</evidence>
<evidence type="ECO:0000305" key="2"/>
<protein>
    <recommendedName>
        <fullName>Uncharacterized protein Rv2242</fullName>
    </recommendedName>
</protein>
<proteinExistence type="evidence at protein level"/>
<dbReference type="EMBL" id="AL123456">
    <property type="protein sequence ID" value="CCP45022.1"/>
    <property type="molecule type" value="Genomic_DNA"/>
</dbReference>
<dbReference type="PIR" id="F70778">
    <property type="entry name" value="F70778"/>
</dbReference>
<dbReference type="RefSeq" id="NP_216758.1">
    <property type="nucleotide sequence ID" value="NC_000962.3"/>
</dbReference>
<dbReference type="RefSeq" id="WP_003411543.1">
    <property type="nucleotide sequence ID" value="NZ_NVQJ01000008.1"/>
</dbReference>
<dbReference type="PDB" id="9F80">
    <property type="method" value="X-ray"/>
    <property type="resolution" value="2.03 A"/>
    <property type="chains" value="A=161-414"/>
</dbReference>
<dbReference type="PDB" id="9FB1">
    <property type="method" value="X-ray"/>
    <property type="resolution" value="3.59 A"/>
    <property type="chains" value="A/B/C/D=2-160"/>
</dbReference>
<dbReference type="PDBsum" id="9F80"/>
<dbReference type="PDBsum" id="9FB1"/>
<dbReference type="SASBDB" id="P9WPH5"/>
<dbReference type="SMR" id="P9WPH5"/>
<dbReference type="STRING" id="83332.Rv2242"/>
<dbReference type="PaxDb" id="83332-Rv2242"/>
<dbReference type="DNASU" id="888624"/>
<dbReference type="GeneID" id="888624"/>
<dbReference type="KEGG" id="mtu:Rv2242"/>
<dbReference type="KEGG" id="mtv:RVBD_2242"/>
<dbReference type="TubercuList" id="Rv2242"/>
<dbReference type="eggNOG" id="COG3835">
    <property type="taxonomic scope" value="Bacteria"/>
</dbReference>
<dbReference type="InParanoid" id="P9WPH5"/>
<dbReference type="OrthoDB" id="3246591at2"/>
<dbReference type="PhylomeDB" id="P9WPH5"/>
<dbReference type="Proteomes" id="UP000001584">
    <property type="component" value="Chromosome"/>
</dbReference>
<dbReference type="GO" id="GO:0003700">
    <property type="term" value="F:DNA-binding transcription factor activity"/>
    <property type="evidence" value="ECO:0000318"/>
    <property type="project" value="GO_Central"/>
</dbReference>
<dbReference type="GO" id="GO:0045893">
    <property type="term" value="P:positive regulation of DNA-templated transcription"/>
    <property type="evidence" value="ECO:0000318"/>
    <property type="project" value="GO_Central"/>
</dbReference>
<dbReference type="Gene3D" id="1.10.10.2840">
    <property type="entry name" value="PucR C-terminal helix-turn-helix domain"/>
    <property type="match status" value="1"/>
</dbReference>
<dbReference type="InterPro" id="IPR051448">
    <property type="entry name" value="CdaR-like_regulators"/>
</dbReference>
<dbReference type="InterPro" id="IPR041522">
    <property type="entry name" value="CdaR_GGDEF"/>
</dbReference>
<dbReference type="InterPro" id="IPR025736">
    <property type="entry name" value="PucR_C-HTH_dom"/>
</dbReference>
<dbReference type="InterPro" id="IPR042070">
    <property type="entry name" value="PucR_C-HTH_sf"/>
</dbReference>
<dbReference type="PANTHER" id="PTHR33744">
    <property type="entry name" value="CARBOHYDRATE DIACID REGULATOR"/>
    <property type="match status" value="1"/>
</dbReference>
<dbReference type="PANTHER" id="PTHR33744:SF7">
    <property type="entry name" value="PUCR FAMILY TRANSCRIPTIONAL REGULATOR"/>
    <property type="match status" value="1"/>
</dbReference>
<dbReference type="Pfam" id="PF17853">
    <property type="entry name" value="GGDEF_2"/>
    <property type="match status" value="1"/>
</dbReference>
<dbReference type="Pfam" id="PF13556">
    <property type="entry name" value="HTH_30"/>
    <property type="match status" value="1"/>
</dbReference>
<gene>
    <name type="ordered locus">Rv2242</name>
    <name type="ORF">MTCY427.23</name>
</gene>
<feature type="chain" id="PRO_0000165949" description="Uncharacterized protein Rv2242">
    <location>
        <begin position="1"/>
        <end position="414"/>
    </location>
</feature>
<feature type="region of interest" description="Disordered" evidence="1">
    <location>
        <begin position="204"/>
        <end position="230"/>
    </location>
</feature>
<feature type="compositionally biased region" description="Basic and acidic residues" evidence="1">
    <location>
        <begin position="220"/>
        <end position="230"/>
    </location>
</feature>
<name>Y2242_MYCTU</name>
<accession>P9WPH5</accession>
<accession>L0TBQ0</accession>
<accession>P63749</accession>
<accession>Q10523</accession>